<protein>
    <recommendedName>
        <fullName evidence="1">Acetylglutamate kinase</fullName>
        <ecNumber evidence="1">2.7.2.8</ecNumber>
    </recommendedName>
    <alternativeName>
        <fullName evidence="1">N-acetyl-L-glutamate 5-phosphotransferase</fullName>
    </alternativeName>
    <alternativeName>
        <fullName evidence="1">NAG kinase</fullName>
        <shortName evidence="1">NAGK</shortName>
    </alternativeName>
</protein>
<organism>
    <name type="scientific">Cytophaga hutchinsonii (strain ATCC 33406 / DSM 1761 / CIP 103989 / NBRC 15051 / NCIMB 9469 / D465)</name>
    <dbReference type="NCBI Taxonomy" id="269798"/>
    <lineage>
        <taxon>Bacteria</taxon>
        <taxon>Pseudomonadati</taxon>
        <taxon>Bacteroidota</taxon>
        <taxon>Cytophagia</taxon>
        <taxon>Cytophagales</taxon>
        <taxon>Cytophagaceae</taxon>
        <taxon>Cytophaga</taxon>
    </lineage>
</organism>
<proteinExistence type="inferred from homology"/>
<keyword id="KW-0028">Amino-acid biosynthesis</keyword>
<keyword id="KW-0055">Arginine biosynthesis</keyword>
<keyword id="KW-0067">ATP-binding</keyword>
<keyword id="KW-0963">Cytoplasm</keyword>
<keyword id="KW-0418">Kinase</keyword>
<keyword id="KW-0547">Nucleotide-binding</keyword>
<keyword id="KW-1185">Reference proteome</keyword>
<keyword id="KW-0808">Transferase</keyword>
<gene>
    <name evidence="1" type="primary">argB</name>
    <name type="ordered locus">CHU_3086</name>
</gene>
<sequence>MQKLYIIKVGGNIIDNPEALTSFLKDFASLKENKILVHGGGKVATEISKGLGIEAQMVDGRRITDAETLKIVTMVYGGLINKNIVAKLQSNECNAIGLTGADANIMLSSKRPLKNGIDYGFVGDVKKVHPQPLIHLLSQGITPVVAPLTHDGNGTMLNTNADTVASELAVALCGAFAVNLVYCFELKGVLRDFEDKDSVISTINPDTYEELKSTGVINKGMIPKLDNSFNAINAGVSSVIICQAESLVELINENKTVGTKLVAN</sequence>
<accession>Q11QI8</accession>
<evidence type="ECO:0000255" key="1">
    <source>
        <dbReference type="HAMAP-Rule" id="MF_00082"/>
    </source>
</evidence>
<feature type="chain" id="PRO_0000264697" description="Acetylglutamate kinase">
    <location>
        <begin position="1"/>
        <end position="264"/>
    </location>
</feature>
<feature type="binding site" evidence="1">
    <location>
        <begin position="40"/>
        <end position="41"/>
    </location>
    <ligand>
        <name>substrate</name>
    </ligand>
</feature>
<feature type="binding site" evidence="1">
    <location>
        <position position="62"/>
    </location>
    <ligand>
        <name>substrate</name>
    </ligand>
</feature>
<feature type="binding site" evidence="1">
    <location>
        <position position="158"/>
    </location>
    <ligand>
        <name>substrate</name>
    </ligand>
</feature>
<feature type="site" description="Transition state stabilizer" evidence="1">
    <location>
        <position position="8"/>
    </location>
</feature>
<feature type="site" description="Transition state stabilizer" evidence="1">
    <location>
        <position position="224"/>
    </location>
</feature>
<name>ARGB_CYTH3</name>
<comment type="function">
    <text evidence="1">Catalyzes the ATP-dependent phosphorylation of N-acetyl-L-glutamate.</text>
</comment>
<comment type="catalytic activity">
    <reaction evidence="1">
        <text>N-acetyl-L-glutamate + ATP = N-acetyl-L-glutamyl 5-phosphate + ADP</text>
        <dbReference type="Rhea" id="RHEA:14629"/>
        <dbReference type="ChEBI" id="CHEBI:30616"/>
        <dbReference type="ChEBI" id="CHEBI:44337"/>
        <dbReference type="ChEBI" id="CHEBI:57936"/>
        <dbReference type="ChEBI" id="CHEBI:456216"/>
        <dbReference type="EC" id="2.7.2.8"/>
    </reaction>
</comment>
<comment type="pathway">
    <text evidence="1">Amino-acid biosynthesis; L-arginine biosynthesis; N(2)-acetyl-L-ornithine from L-glutamate: step 2/4.</text>
</comment>
<comment type="subcellular location">
    <subcellularLocation>
        <location evidence="1">Cytoplasm</location>
    </subcellularLocation>
</comment>
<comment type="similarity">
    <text evidence="1">Belongs to the acetylglutamate kinase family. ArgB subfamily.</text>
</comment>
<dbReference type="EC" id="2.7.2.8" evidence="1"/>
<dbReference type="EMBL" id="CP000383">
    <property type="protein sequence ID" value="ABG60326.1"/>
    <property type="molecule type" value="Genomic_DNA"/>
</dbReference>
<dbReference type="RefSeq" id="WP_011586435.1">
    <property type="nucleotide sequence ID" value="NC_008255.1"/>
</dbReference>
<dbReference type="SMR" id="Q11QI8"/>
<dbReference type="STRING" id="269798.CHU_3086"/>
<dbReference type="KEGG" id="chu:CHU_3086"/>
<dbReference type="eggNOG" id="COG0548">
    <property type="taxonomic scope" value="Bacteria"/>
</dbReference>
<dbReference type="HOGENOM" id="CLU_053680_1_0_10"/>
<dbReference type="OrthoDB" id="9803155at2"/>
<dbReference type="UniPathway" id="UPA00068">
    <property type="reaction ID" value="UER00107"/>
</dbReference>
<dbReference type="Proteomes" id="UP000001822">
    <property type="component" value="Chromosome"/>
</dbReference>
<dbReference type="GO" id="GO:0005737">
    <property type="term" value="C:cytoplasm"/>
    <property type="evidence" value="ECO:0007669"/>
    <property type="project" value="UniProtKB-SubCell"/>
</dbReference>
<dbReference type="GO" id="GO:0003991">
    <property type="term" value="F:acetylglutamate kinase activity"/>
    <property type="evidence" value="ECO:0007669"/>
    <property type="project" value="UniProtKB-UniRule"/>
</dbReference>
<dbReference type="GO" id="GO:0005524">
    <property type="term" value="F:ATP binding"/>
    <property type="evidence" value="ECO:0007669"/>
    <property type="project" value="UniProtKB-UniRule"/>
</dbReference>
<dbReference type="GO" id="GO:0042450">
    <property type="term" value="P:arginine biosynthetic process via ornithine"/>
    <property type="evidence" value="ECO:0007669"/>
    <property type="project" value="UniProtKB-UniRule"/>
</dbReference>
<dbReference type="GO" id="GO:0006526">
    <property type="term" value="P:L-arginine biosynthetic process"/>
    <property type="evidence" value="ECO:0007669"/>
    <property type="project" value="UniProtKB-UniPathway"/>
</dbReference>
<dbReference type="CDD" id="cd04238">
    <property type="entry name" value="AAK_NAGK-like"/>
    <property type="match status" value="1"/>
</dbReference>
<dbReference type="Gene3D" id="3.40.1160.10">
    <property type="entry name" value="Acetylglutamate kinase-like"/>
    <property type="match status" value="1"/>
</dbReference>
<dbReference type="HAMAP" id="MF_00082">
    <property type="entry name" value="ArgB"/>
    <property type="match status" value="1"/>
</dbReference>
<dbReference type="InterPro" id="IPR036393">
    <property type="entry name" value="AceGlu_kinase-like_sf"/>
</dbReference>
<dbReference type="InterPro" id="IPR004662">
    <property type="entry name" value="AcgluKinase_fam"/>
</dbReference>
<dbReference type="InterPro" id="IPR037528">
    <property type="entry name" value="ArgB"/>
</dbReference>
<dbReference type="InterPro" id="IPR001048">
    <property type="entry name" value="Asp/Glu/Uridylate_kinase"/>
</dbReference>
<dbReference type="NCBIfam" id="TIGR00761">
    <property type="entry name" value="argB"/>
    <property type="match status" value="1"/>
</dbReference>
<dbReference type="PANTHER" id="PTHR23342">
    <property type="entry name" value="N-ACETYLGLUTAMATE SYNTHASE"/>
    <property type="match status" value="1"/>
</dbReference>
<dbReference type="PANTHER" id="PTHR23342:SF0">
    <property type="entry name" value="N-ACETYLGLUTAMATE SYNTHASE, MITOCHONDRIAL"/>
    <property type="match status" value="1"/>
</dbReference>
<dbReference type="Pfam" id="PF00696">
    <property type="entry name" value="AA_kinase"/>
    <property type="match status" value="1"/>
</dbReference>
<dbReference type="PIRSF" id="PIRSF000728">
    <property type="entry name" value="NAGK"/>
    <property type="match status" value="1"/>
</dbReference>
<dbReference type="SUPFAM" id="SSF53633">
    <property type="entry name" value="Carbamate kinase-like"/>
    <property type="match status" value="1"/>
</dbReference>
<reference key="1">
    <citation type="journal article" date="2007" name="Appl. Environ. Microbiol.">
        <title>Genome sequence of the cellulolytic gliding bacterium Cytophaga hutchinsonii.</title>
        <authorList>
            <person name="Xie G."/>
            <person name="Bruce D.C."/>
            <person name="Challacombe J.F."/>
            <person name="Chertkov O."/>
            <person name="Detter J.C."/>
            <person name="Gilna P."/>
            <person name="Han C.S."/>
            <person name="Lucas S."/>
            <person name="Misra M."/>
            <person name="Myers G.L."/>
            <person name="Richardson P."/>
            <person name="Tapia R."/>
            <person name="Thayer N."/>
            <person name="Thompson L.S."/>
            <person name="Brettin T.S."/>
            <person name="Henrissat B."/>
            <person name="Wilson D.B."/>
            <person name="McBride M.J."/>
        </authorList>
    </citation>
    <scope>NUCLEOTIDE SEQUENCE [LARGE SCALE GENOMIC DNA]</scope>
    <source>
        <strain>ATCC 33406 / DSM 1761 / JCM 20678 / CIP 103989 / IAM 12607 / NBRC 15051 / NCIMB 9469 / D465</strain>
    </source>
</reference>